<organism>
    <name type="scientific">Dictyostelium discoideum</name>
    <name type="common">Social amoeba</name>
    <dbReference type="NCBI Taxonomy" id="44689"/>
    <lineage>
        <taxon>Eukaryota</taxon>
        <taxon>Amoebozoa</taxon>
        <taxon>Evosea</taxon>
        <taxon>Eumycetozoa</taxon>
        <taxon>Dictyostelia</taxon>
        <taxon>Dictyosteliales</taxon>
        <taxon>Dictyosteliaceae</taxon>
        <taxon>Dictyostelium</taxon>
    </lineage>
</organism>
<protein>
    <recommendedName>
        <fullName>Putative uncharacterized protein DDB_G0292776</fullName>
    </recommendedName>
</protein>
<keyword id="KW-1185">Reference proteome</keyword>
<reference key="1">
    <citation type="journal article" date="2005" name="Nature">
        <title>The genome of the social amoeba Dictyostelium discoideum.</title>
        <authorList>
            <person name="Eichinger L."/>
            <person name="Pachebat J.A."/>
            <person name="Gloeckner G."/>
            <person name="Rajandream M.A."/>
            <person name="Sucgang R."/>
            <person name="Berriman M."/>
            <person name="Song J."/>
            <person name="Olsen R."/>
            <person name="Szafranski K."/>
            <person name="Xu Q."/>
            <person name="Tunggal B."/>
            <person name="Kummerfeld S."/>
            <person name="Madera M."/>
            <person name="Konfortov B.A."/>
            <person name="Rivero F."/>
            <person name="Bankier A.T."/>
            <person name="Lehmann R."/>
            <person name="Hamlin N."/>
            <person name="Davies R."/>
            <person name="Gaudet P."/>
            <person name="Fey P."/>
            <person name="Pilcher K."/>
            <person name="Chen G."/>
            <person name="Saunders D."/>
            <person name="Sodergren E.J."/>
            <person name="Davis P."/>
            <person name="Kerhornou A."/>
            <person name="Nie X."/>
            <person name="Hall N."/>
            <person name="Anjard C."/>
            <person name="Hemphill L."/>
            <person name="Bason N."/>
            <person name="Farbrother P."/>
            <person name="Desany B."/>
            <person name="Just E."/>
            <person name="Morio T."/>
            <person name="Rost R."/>
            <person name="Churcher C.M."/>
            <person name="Cooper J."/>
            <person name="Haydock S."/>
            <person name="van Driessche N."/>
            <person name="Cronin A."/>
            <person name="Goodhead I."/>
            <person name="Muzny D.M."/>
            <person name="Mourier T."/>
            <person name="Pain A."/>
            <person name="Lu M."/>
            <person name="Harper D."/>
            <person name="Lindsay R."/>
            <person name="Hauser H."/>
            <person name="James K.D."/>
            <person name="Quiles M."/>
            <person name="Madan Babu M."/>
            <person name="Saito T."/>
            <person name="Buchrieser C."/>
            <person name="Wardroper A."/>
            <person name="Felder M."/>
            <person name="Thangavelu M."/>
            <person name="Johnson D."/>
            <person name="Knights A."/>
            <person name="Loulseged H."/>
            <person name="Mungall K.L."/>
            <person name="Oliver K."/>
            <person name="Price C."/>
            <person name="Quail M.A."/>
            <person name="Urushihara H."/>
            <person name="Hernandez J."/>
            <person name="Rabbinowitsch E."/>
            <person name="Steffen D."/>
            <person name="Sanders M."/>
            <person name="Ma J."/>
            <person name="Kohara Y."/>
            <person name="Sharp S."/>
            <person name="Simmonds M.N."/>
            <person name="Spiegler S."/>
            <person name="Tivey A."/>
            <person name="Sugano S."/>
            <person name="White B."/>
            <person name="Walker D."/>
            <person name="Woodward J.R."/>
            <person name="Winckler T."/>
            <person name="Tanaka Y."/>
            <person name="Shaulsky G."/>
            <person name="Schleicher M."/>
            <person name="Weinstock G.M."/>
            <person name="Rosenthal A."/>
            <person name="Cox E.C."/>
            <person name="Chisholm R.L."/>
            <person name="Gibbs R.A."/>
            <person name="Loomis W.F."/>
            <person name="Platzer M."/>
            <person name="Kay R.R."/>
            <person name="Williams J.G."/>
            <person name="Dear P.H."/>
            <person name="Noegel A.A."/>
            <person name="Barrell B.G."/>
            <person name="Kuspa A."/>
        </authorList>
    </citation>
    <scope>NUCLEOTIDE SEQUENCE [LARGE SCALE GENOMIC DNA]</scope>
    <source>
        <strain>AX4</strain>
    </source>
</reference>
<accession>Q54CT4</accession>
<dbReference type="EMBL" id="AAFI02000196">
    <property type="protein sequence ID" value="EAL61062.1"/>
    <property type="molecule type" value="Genomic_DNA"/>
</dbReference>
<dbReference type="RefSeq" id="XP_629457.1">
    <property type="nucleotide sequence ID" value="XM_629455.1"/>
</dbReference>
<dbReference type="FunCoup" id="Q54CT4">
    <property type="interactions" value="877"/>
</dbReference>
<dbReference type="PaxDb" id="44689-DDB0184563"/>
<dbReference type="EnsemblProtists" id="EAL61062">
    <property type="protein sequence ID" value="EAL61062"/>
    <property type="gene ID" value="DDB_G0292776"/>
</dbReference>
<dbReference type="GeneID" id="8628847"/>
<dbReference type="KEGG" id="ddi:DDB_G0292776"/>
<dbReference type="dictyBase" id="DDB_G0292776"/>
<dbReference type="VEuPathDB" id="AmoebaDB:DDB_G0292776"/>
<dbReference type="eggNOG" id="ENOG502RIPS">
    <property type="taxonomic scope" value="Eukaryota"/>
</dbReference>
<dbReference type="HOGENOM" id="CLU_1323024_0_0_1"/>
<dbReference type="InParanoid" id="Q54CT4"/>
<dbReference type="OMA" id="NSITNDC"/>
<dbReference type="PRO" id="PR:Q54CT4"/>
<dbReference type="Proteomes" id="UP000002195">
    <property type="component" value="Chromosome 6"/>
</dbReference>
<gene>
    <name type="ORF">DDB_G0292776</name>
</gene>
<proteinExistence type="predicted"/>
<sequence>MNKINNNNNNIHKLIKSLKIGNNDRINNNNNIINNNNIINNNNNDLLIEDDYFNGLLSTSPLPSQFNQLSSSPPSINSSLESIPMSPIRIQSNNVCPGAPIKPKKYLLPKSNYNLPRQRLVFTECVGSGSGSDSSSGSTSSPNTVNNYNSDDESNAAVVSFSPKVSKKLSQSSVQFIPSSSFRQMDSPSGNQNVPVFNSPKARKRLVF</sequence>
<name>Y4563_DICDI</name>
<evidence type="ECO:0000256" key="1">
    <source>
        <dbReference type="SAM" id="MobiDB-lite"/>
    </source>
</evidence>
<feature type="chain" id="PRO_0000344418" description="Putative uncharacterized protein DDB_G0292776">
    <location>
        <begin position="1"/>
        <end position="208"/>
    </location>
</feature>
<feature type="region of interest" description="Disordered" evidence="1">
    <location>
        <begin position="126"/>
        <end position="151"/>
    </location>
</feature>
<feature type="compositionally biased region" description="Low complexity" evidence="1">
    <location>
        <begin position="131"/>
        <end position="141"/>
    </location>
</feature>